<sequence length="104" mass="11696">MSNRDLFAELSSALVEAKQHSEGKLTLKTHHVNDVGELNISPDEIVSIREQFNMSRGVFARLLHTSSRTLENWEQGRSVPNGQAVTLLKLVQRHPETLSHIAEL</sequence>
<proteinExistence type="evidence at protein level"/>
<organism>
    <name type="scientific">Vibrio cholerae serotype O1 (strain ATCC 39315 / El Tor Inaba N16961)</name>
    <dbReference type="NCBI Taxonomy" id="243277"/>
    <lineage>
        <taxon>Bacteria</taxon>
        <taxon>Pseudomonadati</taxon>
        <taxon>Pseudomonadota</taxon>
        <taxon>Gammaproteobacteria</taxon>
        <taxon>Vibrionales</taxon>
        <taxon>Vibrionaceae</taxon>
        <taxon>Vibrio</taxon>
    </lineage>
</organism>
<feature type="chain" id="PRO_0000278767" description="Antitoxin HigA-2">
    <location>
        <begin position="1"/>
        <end position="104"/>
    </location>
</feature>
<feature type="domain" description="HTH cro/C1-type">
    <location>
        <begin position="45"/>
        <end position="98"/>
    </location>
</feature>
<feature type="DNA-binding region" description="H-T-H motif" evidence="1">
    <location>
        <begin position="56"/>
        <end position="75"/>
    </location>
</feature>
<feature type="helix" evidence="4">
    <location>
        <begin position="6"/>
        <end position="21"/>
    </location>
</feature>
<feature type="strand" evidence="4">
    <location>
        <begin position="29"/>
        <end position="32"/>
    </location>
</feature>
<feature type="helix" evidence="3">
    <location>
        <begin position="42"/>
        <end position="51"/>
    </location>
</feature>
<feature type="helix" evidence="3">
    <location>
        <begin position="56"/>
        <end position="62"/>
    </location>
</feature>
<feature type="helix" evidence="3">
    <location>
        <begin position="67"/>
        <end position="74"/>
    </location>
</feature>
<feature type="helix" evidence="3">
    <location>
        <begin position="82"/>
        <end position="93"/>
    </location>
</feature>
<feature type="helix" evidence="3">
    <location>
        <begin position="96"/>
        <end position="102"/>
    </location>
</feature>
<gene>
    <name type="primary">higA-2</name>
    <name type="ordered locus">VC_A0469</name>
</gene>
<comment type="function">
    <text evidence="2">Antitoxin component of a type II toxin-antitoxin (TA) system that counteracts the effect of the HigB-2 toxin. Binds to its own promoter and regulates transcription of the higB-2/higA-2 operon.</text>
</comment>
<comment type="induction">
    <text evidence="2">Induced by amino acid starvation and the protein synthesis inhibitor chloramphenicol.</text>
</comment>
<comment type="miscellaneous">
    <text>HigB-2/HigA-2 has been shown to stabilize plasmids very efficiently in E.coli.</text>
</comment>
<keyword id="KW-0002">3D-structure</keyword>
<keyword id="KW-0238">DNA-binding</keyword>
<keyword id="KW-1185">Reference proteome</keyword>
<keyword id="KW-1277">Toxin-antitoxin system</keyword>
<keyword id="KW-0804">Transcription</keyword>
<keyword id="KW-0805">Transcription regulation</keyword>
<name>HIGA2_VIBCH</name>
<protein>
    <recommendedName>
        <fullName>Antitoxin HigA-2</fullName>
    </recommendedName>
</protein>
<evidence type="ECO:0000250" key="1"/>
<evidence type="ECO:0000269" key="2">
    <source>
    </source>
</evidence>
<evidence type="ECO:0007829" key="3">
    <source>
        <dbReference type="PDB" id="5J9I"/>
    </source>
</evidence>
<evidence type="ECO:0007829" key="4">
    <source>
        <dbReference type="PDB" id="5JAA"/>
    </source>
</evidence>
<reference key="1">
    <citation type="journal article" date="2000" name="Nature">
        <title>DNA sequence of both chromosomes of the cholera pathogen Vibrio cholerae.</title>
        <authorList>
            <person name="Heidelberg J.F."/>
            <person name="Eisen J.A."/>
            <person name="Nelson W.C."/>
            <person name="Clayton R.A."/>
            <person name="Gwinn M.L."/>
            <person name="Dodson R.J."/>
            <person name="Haft D.H."/>
            <person name="Hickey E.K."/>
            <person name="Peterson J.D."/>
            <person name="Umayam L.A."/>
            <person name="Gill S.R."/>
            <person name="Nelson K.E."/>
            <person name="Read T.D."/>
            <person name="Tettelin H."/>
            <person name="Richardson D.L."/>
            <person name="Ermolaeva M.D."/>
            <person name="Vamathevan J.J."/>
            <person name="Bass S."/>
            <person name="Qin H."/>
            <person name="Dragoi I."/>
            <person name="Sellers P."/>
            <person name="McDonald L.A."/>
            <person name="Utterback T.R."/>
            <person name="Fleischmann R.D."/>
            <person name="Nierman W.C."/>
            <person name="White O."/>
            <person name="Salzberg S.L."/>
            <person name="Smith H.O."/>
            <person name="Colwell R.R."/>
            <person name="Mekalanos J.J."/>
            <person name="Venter J.C."/>
            <person name="Fraser C.M."/>
        </authorList>
    </citation>
    <scope>NUCLEOTIDE SEQUENCE [LARGE SCALE GENOMIC DNA]</scope>
    <source>
        <strain>ATCC 39315 / El Tor Inaba N16961</strain>
    </source>
</reference>
<reference key="2">
    <citation type="journal article" date="2006" name="Mol. Microbiol.">
        <title>Two higBA loci in the Vibrio cholerae superintegron encode mRNA cleaving enzymes and can stabilize plasmids.</title>
        <authorList>
            <person name="Christensen-Dalsgaard M."/>
            <person name="Gerdes K."/>
        </authorList>
    </citation>
    <scope>FUNCTION</scope>
    <scope>INDUCTION</scope>
    <source>
        <strain>ATCC 39315 / El Tor Inaba N16961</strain>
    </source>
</reference>
<dbReference type="EMBL" id="AE003853">
    <property type="protein sequence ID" value="AAF96373.1"/>
    <property type="molecule type" value="Genomic_DNA"/>
</dbReference>
<dbReference type="PIR" id="E82455">
    <property type="entry name" value="E82455"/>
</dbReference>
<dbReference type="RefSeq" id="NP_232861.1">
    <property type="nucleotide sequence ID" value="NC_002506.1"/>
</dbReference>
<dbReference type="RefSeq" id="WP_000071008.1">
    <property type="nucleotide sequence ID" value="NZ_LT906615.1"/>
</dbReference>
<dbReference type="PDB" id="5J9I">
    <property type="method" value="X-ray"/>
    <property type="resolution" value="1.80 A"/>
    <property type="chains" value="A/B/C/D/E/F/G/H=1-104"/>
</dbReference>
<dbReference type="PDB" id="5JAA">
    <property type="method" value="X-ray"/>
    <property type="resolution" value="2.99 A"/>
    <property type="chains" value="A/B=2-104"/>
</dbReference>
<dbReference type="PDB" id="8A0W">
    <property type="method" value="X-ray"/>
    <property type="resolution" value="2.33 A"/>
    <property type="chains" value="A/B=2-104"/>
</dbReference>
<dbReference type="PDB" id="8A0X">
    <property type="method" value="X-ray"/>
    <property type="resolution" value="3.30 A"/>
    <property type="chains" value="A/B=2-104"/>
</dbReference>
<dbReference type="PDBsum" id="5J9I"/>
<dbReference type="PDBsum" id="5JAA"/>
<dbReference type="PDBsum" id="8A0W"/>
<dbReference type="PDBsum" id="8A0X"/>
<dbReference type="BMRB" id="Q9KMA5"/>
<dbReference type="SASBDB" id="Q9KMA5"/>
<dbReference type="SMR" id="Q9KMA5"/>
<dbReference type="STRING" id="243277.VC_A0469"/>
<dbReference type="DNASU" id="2611844"/>
<dbReference type="EnsemblBacteria" id="AAF96373">
    <property type="protein sequence ID" value="AAF96373"/>
    <property type="gene ID" value="VC_A0469"/>
</dbReference>
<dbReference type="KEGG" id="vch:VC_A0469"/>
<dbReference type="PATRIC" id="fig|243277.26.peg.3095"/>
<dbReference type="eggNOG" id="COG2944">
    <property type="taxonomic scope" value="Bacteria"/>
</dbReference>
<dbReference type="HOGENOM" id="CLU_144725_3_1_6"/>
<dbReference type="Proteomes" id="UP000000584">
    <property type="component" value="Chromosome 2"/>
</dbReference>
<dbReference type="GO" id="GO:0003677">
    <property type="term" value="F:DNA binding"/>
    <property type="evidence" value="ECO:0007669"/>
    <property type="project" value="UniProtKB-KW"/>
</dbReference>
<dbReference type="CDD" id="cd00093">
    <property type="entry name" value="HTH_XRE"/>
    <property type="match status" value="1"/>
</dbReference>
<dbReference type="DisProt" id="DP01289"/>
<dbReference type="Gene3D" id="1.10.260.40">
    <property type="entry name" value="lambda repressor-like DNA-binding domains"/>
    <property type="match status" value="1"/>
</dbReference>
<dbReference type="InterPro" id="IPR001387">
    <property type="entry name" value="Cro/C1-type_HTH"/>
</dbReference>
<dbReference type="InterPro" id="IPR052359">
    <property type="entry name" value="HTH-type_reg/antitoxin"/>
</dbReference>
<dbReference type="InterPro" id="IPR010982">
    <property type="entry name" value="Lambda_DNA-bd_dom_sf"/>
</dbReference>
<dbReference type="InterPro" id="IPR032758">
    <property type="entry name" value="MqsA/HigA-2"/>
</dbReference>
<dbReference type="PANTHER" id="PTHR36511:SF3">
    <property type="entry name" value="ANTITOXIN HIGA-2"/>
    <property type="match status" value="1"/>
</dbReference>
<dbReference type="PANTHER" id="PTHR36511">
    <property type="entry name" value="MERR FAMILY BACTERIAL REGULATORY PROTEIN"/>
    <property type="match status" value="1"/>
</dbReference>
<dbReference type="Pfam" id="PF15731">
    <property type="entry name" value="MqsA_antitoxin"/>
    <property type="match status" value="1"/>
</dbReference>
<dbReference type="SUPFAM" id="SSF47413">
    <property type="entry name" value="lambda repressor-like DNA-binding domains"/>
    <property type="match status" value="1"/>
</dbReference>
<accession>Q9KMA5</accession>